<accession>Q6MST3</accession>
<proteinExistence type="inferred from homology"/>
<comment type="function">
    <text evidence="1">Catalyzes the attachment of tyrosine to tRNA(Tyr) in a two-step reaction: tyrosine is first activated by ATP to form Tyr-AMP and then transferred to the acceptor end of tRNA(Tyr).</text>
</comment>
<comment type="catalytic activity">
    <reaction evidence="1">
        <text>tRNA(Tyr) + L-tyrosine + ATP = L-tyrosyl-tRNA(Tyr) + AMP + diphosphate + H(+)</text>
        <dbReference type="Rhea" id="RHEA:10220"/>
        <dbReference type="Rhea" id="RHEA-COMP:9706"/>
        <dbReference type="Rhea" id="RHEA-COMP:9707"/>
        <dbReference type="ChEBI" id="CHEBI:15378"/>
        <dbReference type="ChEBI" id="CHEBI:30616"/>
        <dbReference type="ChEBI" id="CHEBI:33019"/>
        <dbReference type="ChEBI" id="CHEBI:58315"/>
        <dbReference type="ChEBI" id="CHEBI:78442"/>
        <dbReference type="ChEBI" id="CHEBI:78536"/>
        <dbReference type="ChEBI" id="CHEBI:456215"/>
        <dbReference type="EC" id="6.1.1.1"/>
    </reaction>
</comment>
<comment type="subunit">
    <text evidence="1">Homodimer.</text>
</comment>
<comment type="subcellular location">
    <subcellularLocation>
        <location evidence="1">Cytoplasm</location>
    </subcellularLocation>
</comment>
<comment type="similarity">
    <text evidence="1">Belongs to the class-I aminoacyl-tRNA synthetase family. TyrS type 1 subfamily.</text>
</comment>
<feature type="chain" id="PRO_0000234735" description="Tyrosine--tRNA ligase">
    <location>
        <begin position="1"/>
        <end position="414"/>
    </location>
</feature>
<feature type="domain" description="S4 RNA-binding" evidence="1">
    <location>
        <begin position="347"/>
        <end position="414"/>
    </location>
</feature>
<feature type="short sequence motif" description="'HIGH' region">
    <location>
        <begin position="40"/>
        <end position="49"/>
    </location>
</feature>
<feature type="short sequence motif" description="'KMSKS' region">
    <location>
        <begin position="226"/>
        <end position="230"/>
    </location>
</feature>
<feature type="binding site" evidence="1">
    <location>
        <position position="35"/>
    </location>
    <ligand>
        <name>L-tyrosine</name>
        <dbReference type="ChEBI" id="CHEBI:58315"/>
    </ligand>
</feature>
<feature type="binding site" evidence="1">
    <location>
        <position position="164"/>
    </location>
    <ligand>
        <name>L-tyrosine</name>
        <dbReference type="ChEBI" id="CHEBI:58315"/>
    </ligand>
</feature>
<feature type="binding site" evidence="1">
    <location>
        <position position="168"/>
    </location>
    <ligand>
        <name>L-tyrosine</name>
        <dbReference type="ChEBI" id="CHEBI:58315"/>
    </ligand>
</feature>
<feature type="binding site" evidence="1">
    <location>
        <position position="229"/>
    </location>
    <ligand>
        <name>ATP</name>
        <dbReference type="ChEBI" id="CHEBI:30616"/>
    </ligand>
</feature>
<name>SYY_MYCMS</name>
<dbReference type="EC" id="6.1.1.1" evidence="1"/>
<dbReference type="EMBL" id="BX293980">
    <property type="protein sequence ID" value="CAE77305.1"/>
    <property type="molecule type" value="Genomic_DNA"/>
</dbReference>
<dbReference type="RefSeq" id="NP_975663.1">
    <property type="nucleotide sequence ID" value="NC_005364.2"/>
</dbReference>
<dbReference type="RefSeq" id="WP_011166856.1">
    <property type="nucleotide sequence ID" value="NC_005364.2"/>
</dbReference>
<dbReference type="SMR" id="Q6MST3"/>
<dbReference type="STRING" id="272632.MSC_0686"/>
<dbReference type="KEGG" id="mmy:MSC_0686"/>
<dbReference type="PATRIC" id="fig|272632.4.peg.738"/>
<dbReference type="eggNOG" id="COG0162">
    <property type="taxonomic scope" value="Bacteria"/>
</dbReference>
<dbReference type="HOGENOM" id="CLU_024003_0_3_14"/>
<dbReference type="Proteomes" id="UP000001016">
    <property type="component" value="Chromosome"/>
</dbReference>
<dbReference type="GO" id="GO:0005829">
    <property type="term" value="C:cytosol"/>
    <property type="evidence" value="ECO:0007669"/>
    <property type="project" value="TreeGrafter"/>
</dbReference>
<dbReference type="GO" id="GO:0005524">
    <property type="term" value="F:ATP binding"/>
    <property type="evidence" value="ECO:0007669"/>
    <property type="project" value="UniProtKB-UniRule"/>
</dbReference>
<dbReference type="GO" id="GO:0003723">
    <property type="term" value="F:RNA binding"/>
    <property type="evidence" value="ECO:0007669"/>
    <property type="project" value="UniProtKB-KW"/>
</dbReference>
<dbReference type="GO" id="GO:0004831">
    <property type="term" value="F:tyrosine-tRNA ligase activity"/>
    <property type="evidence" value="ECO:0007669"/>
    <property type="project" value="UniProtKB-UniRule"/>
</dbReference>
<dbReference type="GO" id="GO:0006437">
    <property type="term" value="P:tyrosyl-tRNA aminoacylation"/>
    <property type="evidence" value="ECO:0007669"/>
    <property type="project" value="UniProtKB-UniRule"/>
</dbReference>
<dbReference type="CDD" id="cd00165">
    <property type="entry name" value="S4"/>
    <property type="match status" value="1"/>
</dbReference>
<dbReference type="CDD" id="cd00805">
    <property type="entry name" value="TyrRS_core"/>
    <property type="match status" value="1"/>
</dbReference>
<dbReference type="FunFam" id="1.10.240.10:FF:000001">
    <property type="entry name" value="Tyrosine--tRNA ligase"/>
    <property type="match status" value="1"/>
</dbReference>
<dbReference type="Gene3D" id="3.40.50.620">
    <property type="entry name" value="HUPs"/>
    <property type="match status" value="1"/>
</dbReference>
<dbReference type="Gene3D" id="3.10.290.10">
    <property type="entry name" value="RNA-binding S4 domain"/>
    <property type="match status" value="1"/>
</dbReference>
<dbReference type="Gene3D" id="1.10.240.10">
    <property type="entry name" value="Tyrosyl-Transfer RNA Synthetase"/>
    <property type="match status" value="1"/>
</dbReference>
<dbReference type="HAMAP" id="MF_02006">
    <property type="entry name" value="Tyr_tRNA_synth_type1"/>
    <property type="match status" value="1"/>
</dbReference>
<dbReference type="InterPro" id="IPR001412">
    <property type="entry name" value="aa-tRNA-synth_I_CS"/>
</dbReference>
<dbReference type="InterPro" id="IPR002305">
    <property type="entry name" value="aa-tRNA-synth_Ic"/>
</dbReference>
<dbReference type="InterPro" id="IPR014729">
    <property type="entry name" value="Rossmann-like_a/b/a_fold"/>
</dbReference>
<dbReference type="InterPro" id="IPR036986">
    <property type="entry name" value="S4_RNA-bd_sf"/>
</dbReference>
<dbReference type="InterPro" id="IPR054608">
    <property type="entry name" value="SYY-like_C"/>
</dbReference>
<dbReference type="InterPro" id="IPR002307">
    <property type="entry name" value="Tyr-tRNA-ligase"/>
</dbReference>
<dbReference type="InterPro" id="IPR024088">
    <property type="entry name" value="Tyr-tRNA-ligase_bac-type"/>
</dbReference>
<dbReference type="InterPro" id="IPR024107">
    <property type="entry name" value="Tyr-tRNA-ligase_bac_1"/>
</dbReference>
<dbReference type="NCBIfam" id="TIGR00234">
    <property type="entry name" value="tyrS"/>
    <property type="match status" value="1"/>
</dbReference>
<dbReference type="PANTHER" id="PTHR11766:SF0">
    <property type="entry name" value="TYROSINE--TRNA LIGASE, MITOCHONDRIAL"/>
    <property type="match status" value="1"/>
</dbReference>
<dbReference type="PANTHER" id="PTHR11766">
    <property type="entry name" value="TYROSYL-TRNA SYNTHETASE"/>
    <property type="match status" value="1"/>
</dbReference>
<dbReference type="Pfam" id="PF22421">
    <property type="entry name" value="SYY_C-terminal"/>
    <property type="match status" value="1"/>
</dbReference>
<dbReference type="Pfam" id="PF00579">
    <property type="entry name" value="tRNA-synt_1b"/>
    <property type="match status" value="1"/>
</dbReference>
<dbReference type="PRINTS" id="PR01040">
    <property type="entry name" value="TRNASYNTHTYR"/>
</dbReference>
<dbReference type="SUPFAM" id="SSF55174">
    <property type="entry name" value="Alpha-L RNA-binding motif"/>
    <property type="match status" value="1"/>
</dbReference>
<dbReference type="SUPFAM" id="SSF52374">
    <property type="entry name" value="Nucleotidylyl transferase"/>
    <property type="match status" value="1"/>
</dbReference>
<dbReference type="PROSITE" id="PS00178">
    <property type="entry name" value="AA_TRNA_LIGASE_I"/>
    <property type="match status" value="1"/>
</dbReference>
<dbReference type="PROSITE" id="PS50889">
    <property type="entry name" value="S4"/>
    <property type="match status" value="1"/>
</dbReference>
<evidence type="ECO:0000255" key="1">
    <source>
        <dbReference type="HAMAP-Rule" id="MF_02006"/>
    </source>
</evidence>
<gene>
    <name evidence="1" type="primary">tyrS</name>
    <name type="ordered locus">MSC_0686</name>
</gene>
<sequence length="414" mass="47142">MKNSILEELKWRGLIKQITNESKILDAQNNNDAVYCGFDPTADSLHVGHLMMIITLKRFADYNFKPIALIGGATGMIGDPSFKANERVLQTKDQVEHNINKISAQLKQIIPNVNFVNNNTWLSNISLIDFLRDIGKHFNLSYLLAKESIATRIQTGLSVTEFCYTMLQAYDFYYLYKNNNCSIQIGGSDQWGNITSGIDFISDTINKNNKAAGLTINLLTKSDGQKFGKTESGTIWLDKTKTSEYEFYQFWFNQTDQDSINLLKCLTFLTKEQIDNLIKEHQNQSSKHLLQKALASEMTKFVHQQQGLDKALKLTEAFFSGDLFSLTNDLFKMALNSLPNTQINKDTKVIDALIEVKAASSKREAREFLTNKAIMINNQIIEDENTLISSFDLIQNKYLLVKKGKKKYFVILIK</sequence>
<reference key="1">
    <citation type="journal article" date="2004" name="Genome Res.">
        <title>The genome sequence of Mycoplasma mycoides subsp. mycoides SC type strain PG1T, the causative agent of contagious bovine pleuropneumonia (CBPP).</title>
        <authorList>
            <person name="Westberg J."/>
            <person name="Persson A."/>
            <person name="Holmberg A."/>
            <person name="Goesmann A."/>
            <person name="Lundeberg J."/>
            <person name="Johansson K.-E."/>
            <person name="Pettersson B."/>
            <person name="Uhlen M."/>
        </authorList>
    </citation>
    <scope>NUCLEOTIDE SEQUENCE [LARGE SCALE GENOMIC DNA]</scope>
    <source>
        <strain>CCUG 32753 / NCTC 10114 / PG1</strain>
    </source>
</reference>
<organism>
    <name type="scientific">Mycoplasma mycoides subsp. mycoides SC (strain CCUG 32753 / NCTC 10114 / PG1)</name>
    <dbReference type="NCBI Taxonomy" id="272632"/>
    <lineage>
        <taxon>Bacteria</taxon>
        <taxon>Bacillati</taxon>
        <taxon>Mycoplasmatota</taxon>
        <taxon>Mollicutes</taxon>
        <taxon>Mycoplasmataceae</taxon>
        <taxon>Mycoplasma</taxon>
    </lineage>
</organism>
<keyword id="KW-0030">Aminoacyl-tRNA synthetase</keyword>
<keyword id="KW-0067">ATP-binding</keyword>
<keyword id="KW-0963">Cytoplasm</keyword>
<keyword id="KW-0436">Ligase</keyword>
<keyword id="KW-0547">Nucleotide-binding</keyword>
<keyword id="KW-0648">Protein biosynthesis</keyword>
<keyword id="KW-1185">Reference proteome</keyword>
<keyword id="KW-0694">RNA-binding</keyword>
<protein>
    <recommendedName>
        <fullName evidence="1">Tyrosine--tRNA ligase</fullName>
        <ecNumber evidence="1">6.1.1.1</ecNumber>
    </recommendedName>
    <alternativeName>
        <fullName evidence="1">Tyrosyl-tRNA synthetase</fullName>
        <shortName evidence="1">TyrRS</shortName>
    </alternativeName>
</protein>